<name>CH60_XANAC</name>
<evidence type="ECO:0000255" key="1">
    <source>
        <dbReference type="HAMAP-Rule" id="MF_00600"/>
    </source>
</evidence>
<feature type="chain" id="PRO_0000063605" description="Chaperonin GroEL">
    <location>
        <begin position="1"/>
        <end position="546"/>
    </location>
</feature>
<feature type="binding site" evidence="1">
    <location>
        <begin position="30"/>
        <end position="33"/>
    </location>
    <ligand>
        <name>ATP</name>
        <dbReference type="ChEBI" id="CHEBI:30616"/>
    </ligand>
</feature>
<feature type="binding site" evidence="1">
    <location>
        <position position="51"/>
    </location>
    <ligand>
        <name>ATP</name>
        <dbReference type="ChEBI" id="CHEBI:30616"/>
    </ligand>
</feature>
<feature type="binding site" evidence="1">
    <location>
        <begin position="87"/>
        <end position="91"/>
    </location>
    <ligand>
        <name>ATP</name>
        <dbReference type="ChEBI" id="CHEBI:30616"/>
    </ligand>
</feature>
<feature type="binding site" evidence="1">
    <location>
        <position position="415"/>
    </location>
    <ligand>
        <name>ATP</name>
        <dbReference type="ChEBI" id="CHEBI:30616"/>
    </ligand>
</feature>
<feature type="binding site" evidence="1">
    <location>
        <begin position="479"/>
        <end position="481"/>
    </location>
    <ligand>
        <name>ATP</name>
        <dbReference type="ChEBI" id="CHEBI:30616"/>
    </ligand>
</feature>
<feature type="binding site" evidence="1">
    <location>
        <position position="495"/>
    </location>
    <ligand>
        <name>ATP</name>
        <dbReference type="ChEBI" id="CHEBI:30616"/>
    </ligand>
</feature>
<keyword id="KW-0067">ATP-binding</keyword>
<keyword id="KW-0143">Chaperone</keyword>
<keyword id="KW-0963">Cytoplasm</keyword>
<keyword id="KW-0413">Isomerase</keyword>
<keyword id="KW-0547">Nucleotide-binding</keyword>
<accession>Q8PPZ1</accession>
<reference key="1">
    <citation type="journal article" date="2002" name="Nature">
        <title>Comparison of the genomes of two Xanthomonas pathogens with differing host specificities.</title>
        <authorList>
            <person name="da Silva A.C.R."/>
            <person name="Ferro J.A."/>
            <person name="Reinach F.C."/>
            <person name="Farah C.S."/>
            <person name="Furlan L.R."/>
            <person name="Quaggio R.B."/>
            <person name="Monteiro-Vitorello C.B."/>
            <person name="Van Sluys M.A."/>
            <person name="Almeida N.F. Jr."/>
            <person name="Alves L.M.C."/>
            <person name="do Amaral A.M."/>
            <person name="Bertolini M.C."/>
            <person name="Camargo L.E.A."/>
            <person name="Camarotte G."/>
            <person name="Cannavan F."/>
            <person name="Cardozo J."/>
            <person name="Chambergo F."/>
            <person name="Ciapina L.P."/>
            <person name="Cicarelli R.M.B."/>
            <person name="Coutinho L.L."/>
            <person name="Cursino-Santos J.R."/>
            <person name="El-Dorry H."/>
            <person name="Faria J.B."/>
            <person name="Ferreira A.J.S."/>
            <person name="Ferreira R.C.C."/>
            <person name="Ferro M.I.T."/>
            <person name="Formighieri E.F."/>
            <person name="Franco M.C."/>
            <person name="Greggio C.C."/>
            <person name="Gruber A."/>
            <person name="Katsuyama A.M."/>
            <person name="Kishi L.T."/>
            <person name="Leite R.P."/>
            <person name="Lemos E.G.M."/>
            <person name="Lemos M.V.F."/>
            <person name="Locali E.C."/>
            <person name="Machado M.A."/>
            <person name="Madeira A.M.B.N."/>
            <person name="Martinez-Rossi N.M."/>
            <person name="Martins E.C."/>
            <person name="Meidanis J."/>
            <person name="Menck C.F.M."/>
            <person name="Miyaki C.Y."/>
            <person name="Moon D.H."/>
            <person name="Moreira L.M."/>
            <person name="Novo M.T.M."/>
            <person name="Okura V.K."/>
            <person name="Oliveira M.C."/>
            <person name="Oliveira V.R."/>
            <person name="Pereira H.A."/>
            <person name="Rossi A."/>
            <person name="Sena J.A.D."/>
            <person name="Silva C."/>
            <person name="de Souza R.F."/>
            <person name="Spinola L.A.F."/>
            <person name="Takita M.A."/>
            <person name="Tamura R.E."/>
            <person name="Teixeira E.C."/>
            <person name="Tezza R.I.D."/>
            <person name="Trindade dos Santos M."/>
            <person name="Truffi D."/>
            <person name="Tsai S.M."/>
            <person name="White F.F."/>
            <person name="Setubal J.C."/>
            <person name="Kitajima J.P."/>
        </authorList>
    </citation>
    <scope>NUCLEOTIDE SEQUENCE [LARGE SCALE GENOMIC DNA]</scope>
    <source>
        <strain>306</strain>
    </source>
</reference>
<sequence length="546" mass="57166">MAAKDIRFGEDARTRMVRGVNVLANAVKATLGPKGRNVVLEKSFGAPTITKDGVSVAKEIELADKFENMGAQMVKEVASKTNDNAGDGTTTATVLAQALIREGAKAVAAGMNPMDLKRGIDQAVKAAVVELKNISKPTTDDKAIAQVGTISANSDESIGNIIAEAMKKVGKEGVITVEEGSGLENELDVVEGMQFDRGYLSPYFINNQQSQSADLDDPFILLHDKKISNVRDLLPVLEGVAKAGKPLLIVAEEVEGEALATLVVNTIRGIVKVVAVKAPGFGDRRKAMLEDMAVLTGGTVISEEVGLALEKATIKDLGRAKKVQVSKENTTIIDGAGDSAAIESRVGQIKTQIEDTSSDYDREKLQERVAKLAGGVAVIKVGASTEIEMKEKKARVEDALHATRAAVEEGVVPGGGVALVRALVAVGDLKGANEDQTHGIQIALRAMEAPLREIVANAGEEPSVILNKVKEGTGNYGYNAANGEFGDMVEFGILDPTKVTRSALQNAASIAGLMITTEAMVADAPKKDEPALPAGGGMGGMGGMDF</sequence>
<dbReference type="EC" id="5.6.1.7" evidence="1"/>
<dbReference type="EMBL" id="AE008923">
    <property type="protein sequence ID" value="AAM35431.1"/>
    <property type="molecule type" value="Genomic_DNA"/>
</dbReference>
<dbReference type="RefSeq" id="WP_003483213.1">
    <property type="nucleotide sequence ID" value="NC_003919.1"/>
</dbReference>
<dbReference type="SMR" id="Q8PPZ1"/>
<dbReference type="GeneID" id="66909746"/>
<dbReference type="KEGG" id="xac:XAC0542"/>
<dbReference type="eggNOG" id="COG0459">
    <property type="taxonomic scope" value="Bacteria"/>
</dbReference>
<dbReference type="HOGENOM" id="CLU_016503_3_0_6"/>
<dbReference type="Proteomes" id="UP000000576">
    <property type="component" value="Chromosome"/>
</dbReference>
<dbReference type="GO" id="GO:0005737">
    <property type="term" value="C:cytoplasm"/>
    <property type="evidence" value="ECO:0007669"/>
    <property type="project" value="UniProtKB-SubCell"/>
</dbReference>
<dbReference type="GO" id="GO:0005524">
    <property type="term" value="F:ATP binding"/>
    <property type="evidence" value="ECO:0007669"/>
    <property type="project" value="UniProtKB-UniRule"/>
</dbReference>
<dbReference type="GO" id="GO:0140662">
    <property type="term" value="F:ATP-dependent protein folding chaperone"/>
    <property type="evidence" value="ECO:0007669"/>
    <property type="project" value="InterPro"/>
</dbReference>
<dbReference type="GO" id="GO:0016853">
    <property type="term" value="F:isomerase activity"/>
    <property type="evidence" value="ECO:0007669"/>
    <property type="project" value="UniProtKB-KW"/>
</dbReference>
<dbReference type="GO" id="GO:0051082">
    <property type="term" value="F:unfolded protein binding"/>
    <property type="evidence" value="ECO:0007669"/>
    <property type="project" value="UniProtKB-UniRule"/>
</dbReference>
<dbReference type="GO" id="GO:0042026">
    <property type="term" value="P:protein refolding"/>
    <property type="evidence" value="ECO:0007669"/>
    <property type="project" value="UniProtKB-UniRule"/>
</dbReference>
<dbReference type="CDD" id="cd03344">
    <property type="entry name" value="GroEL"/>
    <property type="match status" value="1"/>
</dbReference>
<dbReference type="FunFam" id="1.10.560.10:FF:000001">
    <property type="entry name" value="60 kDa chaperonin"/>
    <property type="match status" value="1"/>
</dbReference>
<dbReference type="FunFam" id="3.50.7.10:FF:000001">
    <property type="entry name" value="60 kDa chaperonin"/>
    <property type="match status" value="1"/>
</dbReference>
<dbReference type="Gene3D" id="3.50.7.10">
    <property type="entry name" value="GroEL"/>
    <property type="match status" value="1"/>
</dbReference>
<dbReference type="Gene3D" id="1.10.560.10">
    <property type="entry name" value="GroEL-like equatorial domain"/>
    <property type="match status" value="1"/>
</dbReference>
<dbReference type="Gene3D" id="3.30.260.10">
    <property type="entry name" value="TCP-1-like chaperonin intermediate domain"/>
    <property type="match status" value="1"/>
</dbReference>
<dbReference type="HAMAP" id="MF_00600">
    <property type="entry name" value="CH60"/>
    <property type="match status" value="1"/>
</dbReference>
<dbReference type="InterPro" id="IPR018370">
    <property type="entry name" value="Chaperonin_Cpn60_CS"/>
</dbReference>
<dbReference type="InterPro" id="IPR001844">
    <property type="entry name" value="Cpn60/GroEL"/>
</dbReference>
<dbReference type="InterPro" id="IPR002423">
    <property type="entry name" value="Cpn60/GroEL/TCP-1"/>
</dbReference>
<dbReference type="InterPro" id="IPR027409">
    <property type="entry name" value="GroEL-like_apical_dom_sf"/>
</dbReference>
<dbReference type="InterPro" id="IPR027413">
    <property type="entry name" value="GROEL-like_equatorial_sf"/>
</dbReference>
<dbReference type="InterPro" id="IPR027410">
    <property type="entry name" value="TCP-1-like_intermed_sf"/>
</dbReference>
<dbReference type="NCBIfam" id="TIGR02348">
    <property type="entry name" value="GroEL"/>
    <property type="match status" value="1"/>
</dbReference>
<dbReference type="NCBIfam" id="NF000592">
    <property type="entry name" value="PRK00013.1"/>
    <property type="match status" value="1"/>
</dbReference>
<dbReference type="NCBIfam" id="NF009487">
    <property type="entry name" value="PRK12849.1"/>
    <property type="match status" value="1"/>
</dbReference>
<dbReference type="NCBIfam" id="NF009488">
    <property type="entry name" value="PRK12850.1"/>
    <property type="match status" value="1"/>
</dbReference>
<dbReference type="NCBIfam" id="NF009489">
    <property type="entry name" value="PRK12851.1"/>
    <property type="match status" value="1"/>
</dbReference>
<dbReference type="PANTHER" id="PTHR45633">
    <property type="entry name" value="60 KDA HEAT SHOCK PROTEIN, MITOCHONDRIAL"/>
    <property type="match status" value="1"/>
</dbReference>
<dbReference type="Pfam" id="PF00118">
    <property type="entry name" value="Cpn60_TCP1"/>
    <property type="match status" value="1"/>
</dbReference>
<dbReference type="PRINTS" id="PR00298">
    <property type="entry name" value="CHAPERONIN60"/>
</dbReference>
<dbReference type="SUPFAM" id="SSF52029">
    <property type="entry name" value="GroEL apical domain-like"/>
    <property type="match status" value="1"/>
</dbReference>
<dbReference type="SUPFAM" id="SSF48592">
    <property type="entry name" value="GroEL equatorial domain-like"/>
    <property type="match status" value="1"/>
</dbReference>
<dbReference type="SUPFAM" id="SSF54849">
    <property type="entry name" value="GroEL-intermediate domain like"/>
    <property type="match status" value="1"/>
</dbReference>
<dbReference type="PROSITE" id="PS00296">
    <property type="entry name" value="CHAPERONINS_CPN60"/>
    <property type="match status" value="1"/>
</dbReference>
<comment type="function">
    <text evidence="1">Together with its co-chaperonin GroES, plays an essential role in assisting protein folding. The GroEL-GroES system forms a nano-cage that allows encapsulation of the non-native substrate proteins and provides a physical environment optimized to promote and accelerate protein folding.</text>
</comment>
<comment type="catalytic activity">
    <reaction evidence="1">
        <text>ATP + H2O + a folded polypeptide = ADP + phosphate + an unfolded polypeptide.</text>
        <dbReference type="EC" id="5.6.1.7"/>
    </reaction>
</comment>
<comment type="subunit">
    <text evidence="1">Forms a cylinder of 14 subunits composed of two heptameric rings stacked back-to-back. Interacts with the co-chaperonin GroES.</text>
</comment>
<comment type="subcellular location">
    <subcellularLocation>
        <location evidence="1">Cytoplasm</location>
    </subcellularLocation>
</comment>
<comment type="similarity">
    <text evidence="1">Belongs to the chaperonin (HSP60) family.</text>
</comment>
<gene>
    <name evidence="1" type="primary">groEL</name>
    <name evidence="1" type="synonym">groL</name>
    <name type="ordered locus">XAC0542</name>
</gene>
<proteinExistence type="inferred from homology"/>
<protein>
    <recommendedName>
        <fullName evidence="1">Chaperonin GroEL</fullName>
        <ecNumber evidence="1">5.6.1.7</ecNumber>
    </recommendedName>
    <alternativeName>
        <fullName evidence="1">60 kDa chaperonin</fullName>
    </alternativeName>
    <alternativeName>
        <fullName evidence="1">Chaperonin-60</fullName>
        <shortName evidence="1">Cpn60</shortName>
    </alternativeName>
</protein>
<organism>
    <name type="scientific">Xanthomonas axonopodis pv. citri (strain 306)</name>
    <dbReference type="NCBI Taxonomy" id="190486"/>
    <lineage>
        <taxon>Bacteria</taxon>
        <taxon>Pseudomonadati</taxon>
        <taxon>Pseudomonadota</taxon>
        <taxon>Gammaproteobacteria</taxon>
        <taxon>Lysobacterales</taxon>
        <taxon>Lysobacteraceae</taxon>
        <taxon>Xanthomonas</taxon>
    </lineage>
</organism>